<feature type="chain" id="PRO_0000101515" description="Ribosomal RNA small subunit methyltransferase A">
    <location>
        <begin position="1"/>
        <end position="276"/>
    </location>
</feature>
<feature type="binding site" evidence="1">
    <location>
        <position position="24"/>
    </location>
    <ligand>
        <name>S-adenosyl-L-methionine</name>
        <dbReference type="ChEBI" id="CHEBI:59789"/>
    </ligand>
</feature>
<feature type="binding site" evidence="1">
    <location>
        <position position="26"/>
    </location>
    <ligand>
        <name>S-adenosyl-L-methionine</name>
        <dbReference type="ChEBI" id="CHEBI:59789"/>
    </ligand>
</feature>
<feature type="binding site" evidence="1">
    <location>
        <position position="51"/>
    </location>
    <ligand>
        <name>S-adenosyl-L-methionine</name>
        <dbReference type="ChEBI" id="CHEBI:59789"/>
    </ligand>
</feature>
<feature type="binding site" evidence="1">
    <location>
        <position position="72"/>
    </location>
    <ligand>
        <name>S-adenosyl-L-methionine</name>
        <dbReference type="ChEBI" id="CHEBI:59789"/>
    </ligand>
</feature>
<feature type="binding site" evidence="1">
    <location>
        <position position="97"/>
    </location>
    <ligand>
        <name>S-adenosyl-L-methionine</name>
        <dbReference type="ChEBI" id="CHEBI:59789"/>
    </ligand>
</feature>
<feature type="binding site" evidence="1">
    <location>
        <position position="118"/>
    </location>
    <ligand>
        <name>S-adenosyl-L-methionine</name>
        <dbReference type="ChEBI" id="CHEBI:59789"/>
    </ligand>
</feature>
<proteinExistence type="inferred from homology"/>
<dbReference type="EC" id="2.1.1.182" evidence="1"/>
<dbReference type="EMBL" id="AE001437">
    <property type="protein sequence ID" value="AAK80927.1"/>
    <property type="molecule type" value="Genomic_DNA"/>
</dbReference>
<dbReference type="PIR" id="D97267">
    <property type="entry name" value="D97267"/>
</dbReference>
<dbReference type="RefSeq" id="NP_349587.1">
    <property type="nucleotide sequence ID" value="NC_003030.1"/>
</dbReference>
<dbReference type="RefSeq" id="WP_010966268.1">
    <property type="nucleotide sequence ID" value="NC_003030.1"/>
</dbReference>
<dbReference type="SMR" id="Q97EX0"/>
<dbReference type="STRING" id="272562.CA_C2986"/>
<dbReference type="GeneID" id="44999473"/>
<dbReference type="KEGG" id="cac:CA_C2986"/>
<dbReference type="PATRIC" id="fig|272562.8.peg.3170"/>
<dbReference type="eggNOG" id="COG0030">
    <property type="taxonomic scope" value="Bacteria"/>
</dbReference>
<dbReference type="HOGENOM" id="CLU_041220_0_0_9"/>
<dbReference type="OrthoDB" id="9814755at2"/>
<dbReference type="Proteomes" id="UP000000814">
    <property type="component" value="Chromosome"/>
</dbReference>
<dbReference type="GO" id="GO:0005829">
    <property type="term" value="C:cytosol"/>
    <property type="evidence" value="ECO:0007669"/>
    <property type="project" value="TreeGrafter"/>
</dbReference>
<dbReference type="GO" id="GO:0052908">
    <property type="term" value="F:16S rRNA (adenine(1518)-N(6)/adenine(1519)-N(6))-dimethyltransferase activity"/>
    <property type="evidence" value="ECO:0007669"/>
    <property type="project" value="UniProtKB-EC"/>
</dbReference>
<dbReference type="GO" id="GO:0003723">
    <property type="term" value="F:RNA binding"/>
    <property type="evidence" value="ECO:0007669"/>
    <property type="project" value="UniProtKB-KW"/>
</dbReference>
<dbReference type="CDD" id="cd02440">
    <property type="entry name" value="AdoMet_MTases"/>
    <property type="match status" value="1"/>
</dbReference>
<dbReference type="FunFam" id="1.10.8.100:FF:000001">
    <property type="entry name" value="Ribosomal RNA small subunit methyltransferase A"/>
    <property type="match status" value="1"/>
</dbReference>
<dbReference type="FunFam" id="3.40.50.150:FF:000023">
    <property type="entry name" value="Ribosomal RNA small subunit methyltransferase A"/>
    <property type="match status" value="1"/>
</dbReference>
<dbReference type="Gene3D" id="1.10.8.100">
    <property type="entry name" value="Ribosomal RNA adenine dimethylase-like, domain 2"/>
    <property type="match status" value="1"/>
</dbReference>
<dbReference type="Gene3D" id="3.40.50.150">
    <property type="entry name" value="Vaccinia Virus protein VP39"/>
    <property type="match status" value="1"/>
</dbReference>
<dbReference type="HAMAP" id="MF_00607">
    <property type="entry name" value="16SrRNA_methyltr_A"/>
    <property type="match status" value="1"/>
</dbReference>
<dbReference type="InterPro" id="IPR001737">
    <property type="entry name" value="KsgA/Erm"/>
</dbReference>
<dbReference type="InterPro" id="IPR023165">
    <property type="entry name" value="rRNA_Ade_diMease-like_C"/>
</dbReference>
<dbReference type="InterPro" id="IPR020596">
    <property type="entry name" value="rRNA_Ade_Mease_Trfase_CS"/>
</dbReference>
<dbReference type="InterPro" id="IPR020598">
    <property type="entry name" value="rRNA_Ade_methylase_Trfase_N"/>
</dbReference>
<dbReference type="InterPro" id="IPR011530">
    <property type="entry name" value="rRNA_adenine_dimethylase"/>
</dbReference>
<dbReference type="InterPro" id="IPR029063">
    <property type="entry name" value="SAM-dependent_MTases_sf"/>
</dbReference>
<dbReference type="NCBIfam" id="TIGR00755">
    <property type="entry name" value="ksgA"/>
    <property type="match status" value="1"/>
</dbReference>
<dbReference type="PANTHER" id="PTHR11727">
    <property type="entry name" value="DIMETHYLADENOSINE TRANSFERASE"/>
    <property type="match status" value="1"/>
</dbReference>
<dbReference type="PANTHER" id="PTHR11727:SF7">
    <property type="entry name" value="DIMETHYLADENOSINE TRANSFERASE-RELATED"/>
    <property type="match status" value="1"/>
</dbReference>
<dbReference type="Pfam" id="PF00398">
    <property type="entry name" value="RrnaAD"/>
    <property type="match status" value="1"/>
</dbReference>
<dbReference type="SMART" id="SM00650">
    <property type="entry name" value="rADc"/>
    <property type="match status" value="1"/>
</dbReference>
<dbReference type="SUPFAM" id="SSF53335">
    <property type="entry name" value="S-adenosyl-L-methionine-dependent methyltransferases"/>
    <property type="match status" value="1"/>
</dbReference>
<dbReference type="PROSITE" id="PS01131">
    <property type="entry name" value="RRNA_A_DIMETH"/>
    <property type="match status" value="1"/>
</dbReference>
<dbReference type="PROSITE" id="PS51689">
    <property type="entry name" value="SAM_RNA_A_N6_MT"/>
    <property type="match status" value="1"/>
</dbReference>
<evidence type="ECO:0000255" key="1">
    <source>
        <dbReference type="HAMAP-Rule" id="MF_00607"/>
    </source>
</evidence>
<name>RSMA_CLOAB</name>
<accession>Q97EX0</accession>
<organism>
    <name type="scientific">Clostridium acetobutylicum (strain ATCC 824 / DSM 792 / JCM 1419 / IAM 19013 / LMG 5710 / NBRC 13948 / NRRL B-527 / VKM B-1787 / 2291 / W)</name>
    <dbReference type="NCBI Taxonomy" id="272562"/>
    <lineage>
        <taxon>Bacteria</taxon>
        <taxon>Bacillati</taxon>
        <taxon>Bacillota</taxon>
        <taxon>Clostridia</taxon>
        <taxon>Eubacteriales</taxon>
        <taxon>Clostridiaceae</taxon>
        <taxon>Clostridium</taxon>
    </lineage>
</organism>
<reference key="1">
    <citation type="journal article" date="2001" name="J. Bacteriol.">
        <title>Genome sequence and comparative analysis of the solvent-producing bacterium Clostridium acetobutylicum.</title>
        <authorList>
            <person name="Noelling J."/>
            <person name="Breton G."/>
            <person name="Omelchenko M.V."/>
            <person name="Makarova K.S."/>
            <person name="Zeng Q."/>
            <person name="Gibson R."/>
            <person name="Lee H.M."/>
            <person name="Dubois J."/>
            <person name="Qiu D."/>
            <person name="Hitti J."/>
            <person name="Wolf Y.I."/>
            <person name="Tatusov R.L."/>
            <person name="Sabathe F."/>
            <person name="Doucette-Stamm L.A."/>
            <person name="Soucaille P."/>
            <person name="Daly M.J."/>
            <person name="Bennett G.N."/>
            <person name="Koonin E.V."/>
            <person name="Smith D.R."/>
        </authorList>
    </citation>
    <scope>NUCLEOTIDE SEQUENCE [LARGE SCALE GENOMIC DNA]</scope>
    <source>
        <strain>ATCC 824 / DSM 792 / JCM 1419 / IAM 19013 / LMG 5710 / NBRC 13948 / NRRL B-527 / VKM B-1787 / 2291 / W</strain>
    </source>
</reference>
<sequence>MKEFNTRQIVEKYNFRFSKRLGQNFLTDNTVLDDIVENAEIQKDDFIIEIGPGVGTLTRRLLEKAKKVCAIELDESLIPIITNEMKEYDNFTLIHNDALKVDFNNIIGEEQSVKLVANLPYYVTTPIISKLLNEGYNFKSLTIMIQKEVGDRIAAKPSTKDYGALTLLVQYYCDVKVVRVVKPSCFIPQPKVDSLVIRLDKLEKPRVQVKDEKLFFNVIRSAFNMRRKTLWNAMKGLKLSSEDLEKAFEAAGIDSKRRGETLSIEEFGKLSDEIYR</sequence>
<gene>
    <name evidence="1" type="primary">rsmA</name>
    <name evidence="1" type="synonym">ksgA</name>
    <name type="ordered locus">CA_C2986</name>
</gene>
<comment type="function">
    <text evidence="1">Specifically dimethylates two adjacent adenosines (A1518 and A1519) in the loop of a conserved hairpin near the 3'-end of 16S rRNA in the 30S particle. May play a critical role in biogenesis of 30S subunits.</text>
</comment>
<comment type="catalytic activity">
    <reaction evidence="1">
        <text>adenosine(1518)/adenosine(1519) in 16S rRNA + 4 S-adenosyl-L-methionine = N(6)-dimethyladenosine(1518)/N(6)-dimethyladenosine(1519) in 16S rRNA + 4 S-adenosyl-L-homocysteine + 4 H(+)</text>
        <dbReference type="Rhea" id="RHEA:19609"/>
        <dbReference type="Rhea" id="RHEA-COMP:10232"/>
        <dbReference type="Rhea" id="RHEA-COMP:10233"/>
        <dbReference type="ChEBI" id="CHEBI:15378"/>
        <dbReference type="ChEBI" id="CHEBI:57856"/>
        <dbReference type="ChEBI" id="CHEBI:59789"/>
        <dbReference type="ChEBI" id="CHEBI:74411"/>
        <dbReference type="ChEBI" id="CHEBI:74493"/>
        <dbReference type="EC" id="2.1.1.182"/>
    </reaction>
</comment>
<comment type="subcellular location">
    <subcellularLocation>
        <location evidence="1">Cytoplasm</location>
    </subcellularLocation>
</comment>
<comment type="similarity">
    <text evidence="1">Belongs to the class I-like SAM-binding methyltransferase superfamily. rRNA adenine N(6)-methyltransferase family. RsmA subfamily.</text>
</comment>
<keyword id="KW-0963">Cytoplasm</keyword>
<keyword id="KW-0489">Methyltransferase</keyword>
<keyword id="KW-1185">Reference proteome</keyword>
<keyword id="KW-0694">RNA-binding</keyword>
<keyword id="KW-0698">rRNA processing</keyword>
<keyword id="KW-0949">S-adenosyl-L-methionine</keyword>
<keyword id="KW-0808">Transferase</keyword>
<protein>
    <recommendedName>
        <fullName evidence="1">Ribosomal RNA small subunit methyltransferase A</fullName>
        <ecNumber evidence="1">2.1.1.182</ecNumber>
    </recommendedName>
    <alternativeName>
        <fullName evidence="1">16S rRNA (adenine(1518)-N(6)/adenine(1519)-N(6))-dimethyltransferase</fullName>
    </alternativeName>
    <alternativeName>
        <fullName evidence="1">16S rRNA dimethyladenosine transferase</fullName>
    </alternativeName>
    <alternativeName>
        <fullName evidence="1">16S rRNA dimethylase</fullName>
    </alternativeName>
    <alternativeName>
        <fullName evidence="1">S-adenosylmethionine-6-N', N'-adenosyl(rRNA) dimethyltransferase</fullName>
    </alternativeName>
</protein>